<protein>
    <recommendedName>
        <fullName evidence="1">ATP synthase epsilon chain</fullName>
    </recommendedName>
    <alternativeName>
        <fullName evidence="1">ATP synthase F1 sector epsilon subunit</fullName>
    </alternativeName>
    <alternativeName>
        <fullName evidence="1">F-ATPase epsilon subunit</fullName>
    </alternativeName>
</protein>
<evidence type="ECO:0000255" key="1">
    <source>
        <dbReference type="HAMAP-Rule" id="MF_00530"/>
    </source>
</evidence>
<feature type="chain" id="PRO_1000081723" description="ATP synthase epsilon chain">
    <location>
        <begin position="1"/>
        <end position="133"/>
    </location>
</feature>
<name>ATPE_BACCN</name>
<comment type="function">
    <text evidence="1">Produces ATP from ADP in the presence of a proton gradient across the membrane.</text>
</comment>
<comment type="subunit">
    <text evidence="1">F-type ATPases have 2 components, CF(1) - the catalytic core - and CF(0) - the membrane proton channel. CF(1) has five subunits: alpha(3), beta(3), gamma(1), delta(1), epsilon(1). CF(0) has three main subunits: a, b and c.</text>
</comment>
<comment type="subcellular location">
    <subcellularLocation>
        <location evidence="1">Cell membrane</location>
        <topology evidence="1">Peripheral membrane protein</topology>
    </subcellularLocation>
</comment>
<comment type="similarity">
    <text evidence="1">Belongs to the ATPase epsilon chain family.</text>
</comment>
<reference key="1">
    <citation type="journal article" date="2008" name="Chem. Biol. Interact.">
        <title>Extending the Bacillus cereus group genomics to putative food-borne pathogens of different toxicity.</title>
        <authorList>
            <person name="Lapidus A."/>
            <person name="Goltsman E."/>
            <person name="Auger S."/>
            <person name="Galleron N."/>
            <person name="Segurens B."/>
            <person name="Dossat C."/>
            <person name="Land M.L."/>
            <person name="Broussolle V."/>
            <person name="Brillard J."/>
            <person name="Guinebretiere M.-H."/>
            <person name="Sanchis V."/>
            <person name="Nguen-the C."/>
            <person name="Lereclus D."/>
            <person name="Richardson P."/>
            <person name="Wincker P."/>
            <person name="Weissenbach J."/>
            <person name="Ehrlich S.D."/>
            <person name="Sorokin A."/>
        </authorList>
    </citation>
    <scope>NUCLEOTIDE SEQUENCE [LARGE SCALE GENOMIC DNA]</scope>
    <source>
        <strain>DSM 22905 / CIP 110041 / 391-98 / NVH 391-98</strain>
    </source>
</reference>
<keyword id="KW-0066">ATP synthesis</keyword>
<keyword id="KW-1003">Cell membrane</keyword>
<keyword id="KW-0139">CF(1)</keyword>
<keyword id="KW-0375">Hydrogen ion transport</keyword>
<keyword id="KW-0406">Ion transport</keyword>
<keyword id="KW-0472">Membrane</keyword>
<keyword id="KW-0813">Transport</keyword>
<organism>
    <name type="scientific">Bacillus cytotoxicus (strain DSM 22905 / CIP 110041 / 391-98 / NVH 391-98)</name>
    <dbReference type="NCBI Taxonomy" id="315749"/>
    <lineage>
        <taxon>Bacteria</taxon>
        <taxon>Bacillati</taxon>
        <taxon>Bacillota</taxon>
        <taxon>Bacilli</taxon>
        <taxon>Bacillales</taxon>
        <taxon>Bacillaceae</taxon>
        <taxon>Bacillus</taxon>
        <taxon>Bacillus cereus group</taxon>
    </lineage>
</organism>
<accession>A7GV55</accession>
<gene>
    <name evidence="1" type="primary">atpC</name>
    <name type="ordered locus">Bcer98_3824</name>
</gene>
<sequence length="133" mass="14626">MKTFPVSIVTPDGPVYEKEVEMVSVKAESGEMGILPGHIPTVAPLKISAVRLKNGGHTDYVAVSGGFIEVRPDKVTVLATSAEEANHIDTHRANEAKRRAEQRLQDKQAHVDFKRAELALKRAINRLDVSNMK</sequence>
<proteinExistence type="inferred from homology"/>
<dbReference type="EMBL" id="CP000764">
    <property type="protein sequence ID" value="ABS24013.1"/>
    <property type="molecule type" value="Genomic_DNA"/>
</dbReference>
<dbReference type="RefSeq" id="WP_012096271.1">
    <property type="nucleotide sequence ID" value="NC_009674.1"/>
</dbReference>
<dbReference type="SMR" id="A7GV55"/>
<dbReference type="STRING" id="315749.Bcer98_3824"/>
<dbReference type="GeneID" id="33899065"/>
<dbReference type="KEGG" id="bcy:Bcer98_3824"/>
<dbReference type="eggNOG" id="COG0355">
    <property type="taxonomic scope" value="Bacteria"/>
</dbReference>
<dbReference type="HOGENOM" id="CLU_084338_1_3_9"/>
<dbReference type="OrthoDB" id="9804110at2"/>
<dbReference type="Proteomes" id="UP000002300">
    <property type="component" value="Chromosome"/>
</dbReference>
<dbReference type="GO" id="GO:0005886">
    <property type="term" value="C:plasma membrane"/>
    <property type="evidence" value="ECO:0007669"/>
    <property type="project" value="UniProtKB-SubCell"/>
</dbReference>
<dbReference type="GO" id="GO:0045259">
    <property type="term" value="C:proton-transporting ATP synthase complex"/>
    <property type="evidence" value="ECO:0007669"/>
    <property type="project" value="UniProtKB-KW"/>
</dbReference>
<dbReference type="GO" id="GO:0005524">
    <property type="term" value="F:ATP binding"/>
    <property type="evidence" value="ECO:0007669"/>
    <property type="project" value="UniProtKB-UniRule"/>
</dbReference>
<dbReference type="GO" id="GO:0046933">
    <property type="term" value="F:proton-transporting ATP synthase activity, rotational mechanism"/>
    <property type="evidence" value="ECO:0007669"/>
    <property type="project" value="UniProtKB-UniRule"/>
</dbReference>
<dbReference type="CDD" id="cd12152">
    <property type="entry name" value="F1-ATPase_delta"/>
    <property type="match status" value="1"/>
</dbReference>
<dbReference type="FunFam" id="1.20.5.440:FF:000001">
    <property type="entry name" value="ATP synthase epsilon chain"/>
    <property type="match status" value="1"/>
</dbReference>
<dbReference type="FunFam" id="2.60.15.10:FF:000001">
    <property type="entry name" value="ATP synthase epsilon chain"/>
    <property type="match status" value="1"/>
</dbReference>
<dbReference type="Gene3D" id="1.20.5.440">
    <property type="entry name" value="ATP synthase delta/epsilon subunit, C-terminal domain"/>
    <property type="match status" value="1"/>
</dbReference>
<dbReference type="Gene3D" id="2.60.15.10">
    <property type="entry name" value="F0F1 ATP synthase delta/epsilon subunit, N-terminal"/>
    <property type="match status" value="1"/>
</dbReference>
<dbReference type="HAMAP" id="MF_00530">
    <property type="entry name" value="ATP_synth_epsil_bac"/>
    <property type="match status" value="1"/>
</dbReference>
<dbReference type="InterPro" id="IPR036794">
    <property type="entry name" value="ATP_F1_dsu/esu_C_sf"/>
</dbReference>
<dbReference type="InterPro" id="IPR001469">
    <property type="entry name" value="ATP_synth_F1_dsu/esu"/>
</dbReference>
<dbReference type="InterPro" id="IPR020546">
    <property type="entry name" value="ATP_synth_F1_dsu/esu_N"/>
</dbReference>
<dbReference type="InterPro" id="IPR020547">
    <property type="entry name" value="ATP_synth_F1_esu_C"/>
</dbReference>
<dbReference type="InterPro" id="IPR036771">
    <property type="entry name" value="ATPsynth_dsu/esu_N"/>
</dbReference>
<dbReference type="NCBIfam" id="TIGR01216">
    <property type="entry name" value="ATP_synt_epsi"/>
    <property type="match status" value="1"/>
</dbReference>
<dbReference type="NCBIfam" id="NF001846">
    <property type="entry name" value="PRK00571.1-3"/>
    <property type="match status" value="1"/>
</dbReference>
<dbReference type="NCBIfam" id="NF009980">
    <property type="entry name" value="PRK13446.1"/>
    <property type="match status" value="1"/>
</dbReference>
<dbReference type="PANTHER" id="PTHR13822">
    <property type="entry name" value="ATP SYNTHASE DELTA/EPSILON CHAIN"/>
    <property type="match status" value="1"/>
</dbReference>
<dbReference type="PANTHER" id="PTHR13822:SF10">
    <property type="entry name" value="ATP SYNTHASE EPSILON CHAIN, CHLOROPLASTIC"/>
    <property type="match status" value="1"/>
</dbReference>
<dbReference type="Pfam" id="PF00401">
    <property type="entry name" value="ATP-synt_DE"/>
    <property type="match status" value="1"/>
</dbReference>
<dbReference type="Pfam" id="PF02823">
    <property type="entry name" value="ATP-synt_DE_N"/>
    <property type="match status" value="1"/>
</dbReference>
<dbReference type="SUPFAM" id="SSF46604">
    <property type="entry name" value="Epsilon subunit of F1F0-ATP synthase C-terminal domain"/>
    <property type="match status" value="1"/>
</dbReference>
<dbReference type="SUPFAM" id="SSF51344">
    <property type="entry name" value="Epsilon subunit of F1F0-ATP synthase N-terminal domain"/>
    <property type="match status" value="1"/>
</dbReference>